<name>PAGP_ERWAE</name>
<accession>D4I8K8</accession>
<gene>
    <name evidence="1" type="primary">pagP</name>
    <name type="ordered locus">EAM_1115</name>
</gene>
<keyword id="KW-0012">Acyltransferase</keyword>
<keyword id="KW-0998">Cell outer membrane</keyword>
<keyword id="KW-0472">Membrane</keyword>
<keyword id="KW-0732">Signal</keyword>
<keyword id="KW-0808">Transferase</keyword>
<evidence type="ECO:0000255" key="1">
    <source>
        <dbReference type="HAMAP-Rule" id="MF_00837"/>
    </source>
</evidence>
<reference key="1">
    <citation type="journal article" date="2010" name="J. Bacteriol.">
        <title>Complete genome sequence of the plant pathogen Erwinia amylovora strain ATCC 49946.</title>
        <authorList>
            <person name="Sebaihia M."/>
            <person name="Bocsanczy A.M."/>
            <person name="Biehl B.S."/>
            <person name="Quail M.A."/>
            <person name="Perna N.T."/>
            <person name="Glasner J.D."/>
            <person name="DeClerck G.A."/>
            <person name="Cartinhour S."/>
            <person name="Schneider D.J."/>
            <person name="Bentley S.D."/>
            <person name="Parkhill J."/>
            <person name="Beer S.V."/>
        </authorList>
    </citation>
    <scope>NUCLEOTIDE SEQUENCE [LARGE SCALE GENOMIC DNA]</scope>
    <source>
        <strain>ATCC 49946 / CCPPB 0273 / Ea273 / 27-3</strain>
    </source>
</reference>
<comment type="function">
    <text evidence="1">Transfers a fatty acid residue from the sn-1 position of a phospholipid to the N-linked hydroxyfatty acid chain on the proximal unit of lipid A or its precursors.</text>
</comment>
<comment type="catalytic activity">
    <reaction evidence="1">
        <text>a lipid A + a 1,2-diacyl-sn-glycero-3-phosphocholine = a hepta-acyl lipid A + a 2-acyl-sn-glycero-3-phosphocholine</text>
        <dbReference type="Rhea" id="RHEA:74275"/>
        <dbReference type="ChEBI" id="CHEBI:57643"/>
        <dbReference type="ChEBI" id="CHEBI:57875"/>
        <dbReference type="ChEBI" id="CHEBI:193141"/>
        <dbReference type="ChEBI" id="CHEBI:193142"/>
        <dbReference type="EC" id="2.3.1.251"/>
    </reaction>
</comment>
<comment type="catalytic activity">
    <reaction evidence="1">
        <text>a lipid IVA + a 1,2-diacyl-sn-glycero-3-phosphocholine = a lipid IVB + a 2-acyl-sn-glycero-3-phosphocholine</text>
        <dbReference type="Rhea" id="RHEA:74279"/>
        <dbReference type="ChEBI" id="CHEBI:57643"/>
        <dbReference type="ChEBI" id="CHEBI:57875"/>
        <dbReference type="ChEBI" id="CHEBI:176425"/>
        <dbReference type="ChEBI" id="CHEBI:193143"/>
        <dbReference type="EC" id="2.3.1.251"/>
    </reaction>
</comment>
<comment type="catalytic activity">
    <reaction evidence="1">
        <text>a lipid IIA + a 1,2-diacyl-sn-glycero-3-phosphocholine = a lipid IIB + a 2-acyl-sn-glycero-3-phosphocholine</text>
        <dbReference type="Rhea" id="RHEA:74283"/>
        <dbReference type="ChEBI" id="CHEBI:57643"/>
        <dbReference type="ChEBI" id="CHEBI:57875"/>
        <dbReference type="ChEBI" id="CHEBI:193144"/>
        <dbReference type="ChEBI" id="CHEBI:193145"/>
        <dbReference type="EC" id="2.3.1.251"/>
    </reaction>
</comment>
<comment type="subunit">
    <text evidence="1">Homodimer.</text>
</comment>
<comment type="subcellular location">
    <subcellularLocation>
        <location evidence="1">Cell outer membrane</location>
    </subcellularLocation>
</comment>
<comment type="similarity">
    <text evidence="1">Belongs to the lipid A palmitoyltransferase family.</text>
</comment>
<proteinExistence type="inferred from homology"/>
<dbReference type="EC" id="2.3.1.251" evidence="1"/>
<dbReference type="EMBL" id="FN666575">
    <property type="protein sequence ID" value="CBJ45790.1"/>
    <property type="molecule type" value="Genomic_DNA"/>
</dbReference>
<dbReference type="RefSeq" id="WP_013035937.1">
    <property type="nucleotide sequence ID" value="NC_013971.1"/>
</dbReference>
<dbReference type="SMR" id="D4I8K8"/>
<dbReference type="GeneID" id="97605411"/>
<dbReference type="KEGG" id="eay:EAM_1115"/>
<dbReference type="PATRIC" id="fig|665029.3.peg.1085"/>
<dbReference type="HOGENOM" id="CLU_104099_0_0_6"/>
<dbReference type="GO" id="GO:0009279">
    <property type="term" value="C:cell outer membrane"/>
    <property type="evidence" value="ECO:0007669"/>
    <property type="project" value="UniProtKB-SubCell"/>
</dbReference>
<dbReference type="GO" id="GO:0016746">
    <property type="term" value="F:acyltransferase activity"/>
    <property type="evidence" value="ECO:0007669"/>
    <property type="project" value="UniProtKB-UniRule"/>
</dbReference>
<dbReference type="GO" id="GO:0009245">
    <property type="term" value="P:lipid A biosynthetic process"/>
    <property type="evidence" value="ECO:0007669"/>
    <property type="project" value="UniProtKB-UniRule"/>
</dbReference>
<dbReference type="FunFam" id="2.40.160.20:FF:000002">
    <property type="entry name" value="Lipid A palmitoyltransferase PagP"/>
    <property type="match status" value="1"/>
</dbReference>
<dbReference type="Gene3D" id="2.40.160.20">
    <property type="match status" value="1"/>
</dbReference>
<dbReference type="HAMAP" id="MF_00837">
    <property type="entry name" value="PagP_transferase"/>
    <property type="match status" value="1"/>
</dbReference>
<dbReference type="InterPro" id="IPR009746">
    <property type="entry name" value="LipidA_acyl_PagP"/>
</dbReference>
<dbReference type="InterPro" id="IPR011250">
    <property type="entry name" value="OMP/PagP_b-brl"/>
</dbReference>
<dbReference type="NCBIfam" id="NF008271">
    <property type="entry name" value="PRK11045.1"/>
    <property type="match status" value="1"/>
</dbReference>
<dbReference type="Pfam" id="PF07017">
    <property type="entry name" value="PagP"/>
    <property type="match status" value="1"/>
</dbReference>
<dbReference type="SUPFAM" id="SSF56925">
    <property type="entry name" value="OMPA-like"/>
    <property type="match status" value="1"/>
</dbReference>
<feature type="signal peptide" evidence="1">
    <location>
        <begin position="1"/>
        <end position="23"/>
    </location>
</feature>
<feature type="chain" id="PRO_0000414442" description="Lipid A acyltransferase PagP">
    <location>
        <begin position="24"/>
        <end position="189"/>
    </location>
</feature>
<feature type="active site" evidence="1">
    <location>
        <position position="61"/>
    </location>
</feature>
<feature type="active site" evidence="1">
    <location>
        <position position="104"/>
    </location>
</feature>
<feature type="active site" evidence="1">
    <location>
        <position position="105"/>
    </location>
</feature>
<feature type="site" description="Role in lipopolysaccharide recognition" evidence="1">
    <location>
        <position position="70"/>
    </location>
</feature>
<feature type="site" description="Role in the phospholipid gating" evidence="1">
    <location>
        <position position="175"/>
    </location>
</feature>
<organism>
    <name type="scientific">Erwinia amylovora (strain ATCC 49946 / CCPPB 0273 / Ea273 / 27-3)</name>
    <dbReference type="NCBI Taxonomy" id="716540"/>
    <lineage>
        <taxon>Bacteria</taxon>
        <taxon>Pseudomonadati</taxon>
        <taxon>Pseudomonadota</taxon>
        <taxon>Gammaproteobacteria</taxon>
        <taxon>Enterobacterales</taxon>
        <taxon>Erwiniaceae</taxon>
        <taxon>Erwinia</taxon>
    </lineage>
</organism>
<protein>
    <recommendedName>
        <fullName evidence="1">Lipid A acyltransferase PagP</fullName>
        <ecNumber evidence="1">2.3.1.251</ecNumber>
    </recommendedName>
    <alternativeName>
        <fullName evidence="1">Lipid A acylation protein</fullName>
    </alternativeName>
</protein>
<sequence length="189" mass="21902">MKLKSVLYLLMLLNCLGLKSAHAATLVHGISTSWHSFSNSVSQTWNEPQTFDLYMPALTWHNRWTYDADKIDRYNERPWGAGGGMSRYDEKGNWNGIYLMAFKDSFNKWEPIGGYGWEKTWRPLNDPDFHFGLGYTAGVTMRDNWNYIPIPLLLPLASIGYGAANFQMTYIPGTYNNGNVYFAWLRWQF</sequence>